<protein>
    <recommendedName>
        <fullName evidence="1">Imidazole glycerol phosphate synthase subunit HisF</fullName>
        <ecNumber evidence="1">4.3.2.10</ecNumber>
    </recommendedName>
    <alternativeName>
        <fullName evidence="1">IGP synthase cyclase subunit</fullName>
    </alternativeName>
    <alternativeName>
        <fullName evidence="1">IGP synthase subunit HisF</fullName>
    </alternativeName>
    <alternativeName>
        <fullName evidence="1">ImGP synthase subunit HisF</fullName>
        <shortName evidence="1">IGPS subunit HisF</shortName>
    </alternativeName>
</protein>
<gene>
    <name evidence="1" type="primary">hisF</name>
    <name type="ordered locus">MUL_1578</name>
</gene>
<comment type="function">
    <text evidence="1">IGPS catalyzes the conversion of PRFAR and glutamine to IGP, AICAR and glutamate. The HisF subunit catalyzes the cyclization activity that produces IGP and AICAR from PRFAR using the ammonia provided by the HisH subunit.</text>
</comment>
<comment type="catalytic activity">
    <reaction evidence="1">
        <text>5-[(5-phospho-1-deoxy-D-ribulos-1-ylimino)methylamino]-1-(5-phospho-beta-D-ribosyl)imidazole-4-carboxamide + L-glutamine = D-erythro-1-(imidazol-4-yl)glycerol 3-phosphate + 5-amino-1-(5-phospho-beta-D-ribosyl)imidazole-4-carboxamide + L-glutamate + H(+)</text>
        <dbReference type="Rhea" id="RHEA:24793"/>
        <dbReference type="ChEBI" id="CHEBI:15378"/>
        <dbReference type="ChEBI" id="CHEBI:29985"/>
        <dbReference type="ChEBI" id="CHEBI:58278"/>
        <dbReference type="ChEBI" id="CHEBI:58359"/>
        <dbReference type="ChEBI" id="CHEBI:58475"/>
        <dbReference type="ChEBI" id="CHEBI:58525"/>
        <dbReference type="EC" id="4.3.2.10"/>
    </reaction>
</comment>
<comment type="pathway">
    <text evidence="1">Amino-acid biosynthesis; L-histidine biosynthesis; L-histidine from 5-phospho-alpha-D-ribose 1-diphosphate: step 5/9.</text>
</comment>
<comment type="subunit">
    <text evidence="1">Heterodimer of HisH and HisF.</text>
</comment>
<comment type="subcellular location">
    <subcellularLocation>
        <location evidence="1">Cytoplasm</location>
    </subcellularLocation>
</comment>
<comment type="similarity">
    <text evidence="1">Belongs to the HisA/HisF family.</text>
</comment>
<feature type="chain" id="PRO_1000063099" description="Imidazole glycerol phosphate synthase subunit HisF">
    <location>
        <begin position="1"/>
        <end position="261"/>
    </location>
</feature>
<feature type="active site" evidence="1">
    <location>
        <position position="16"/>
    </location>
</feature>
<feature type="active site" evidence="1">
    <location>
        <position position="135"/>
    </location>
</feature>
<accession>A0PP20</accession>
<proteinExistence type="inferred from homology"/>
<name>HIS6_MYCUA</name>
<keyword id="KW-0028">Amino-acid biosynthesis</keyword>
<keyword id="KW-0963">Cytoplasm</keyword>
<keyword id="KW-0368">Histidine biosynthesis</keyword>
<keyword id="KW-0456">Lyase</keyword>
<dbReference type="EC" id="4.3.2.10" evidence="1"/>
<dbReference type="EMBL" id="CP000325">
    <property type="protein sequence ID" value="ABL04089.1"/>
    <property type="molecule type" value="Genomic_DNA"/>
</dbReference>
<dbReference type="RefSeq" id="WP_011739709.1">
    <property type="nucleotide sequence ID" value="NC_008611.1"/>
</dbReference>
<dbReference type="SMR" id="A0PP20"/>
<dbReference type="KEGG" id="mul:MUL_1578"/>
<dbReference type="eggNOG" id="COG0107">
    <property type="taxonomic scope" value="Bacteria"/>
</dbReference>
<dbReference type="HOGENOM" id="CLU_048577_4_0_11"/>
<dbReference type="UniPathway" id="UPA00031">
    <property type="reaction ID" value="UER00010"/>
</dbReference>
<dbReference type="Proteomes" id="UP000000765">
    <property type="component" value="Chromosome"/>
</dbReference>
<dbReference type="GO" id="GO:0005737">
    <property type="term" value="C:cytoplasm"/>
    <property type="evidence" value="ECO:0007669"/>
    <property type="project" value="UniProtKB-SubCell"/>
</dbReference>
<dbReference type="GO" id="GO:0000107">
    <property type="term" value="F:imidazoleglycerol-phosphate synthase activity"/>
    <property type="evidence" value="ECO:0007669"/>
    <property type="project" value="UniProtKB-UniRule"/>
</dbReference>
<dbReference type="GO" id="GO:0016829">
    <property type="term" value="F:lyase activity"/>
    <property type="evidence" value="ECO:0007669"/>
    <property type="project" value="UniProtKB-KW"/>
</dbReference>
<dbReference type="GO" id="GO:0000105">
    <property type="term" value="P:L-histidine biosynthetic process"/>
    <property type="evidence" value="ECO:0007669"/>
    <property type="project" value="UniProtKB-UniRule"/>
</dbReference>
<dbReference type="CDD" id="cd04731">
    <property type="entry name" value="HisF"/>
    <property type="match status" value="1"/>
</dbReference>
<dbReference type="FunFam" id="3.20.20.70:FF:000006">
    <property type="entry name" value="Imidazole glycerol phosphate synthase subunit HisF"/>
    <property type="match status" value="1"/>
</dbReference>
<dbReference type="Gene3D" id="3.20.20.70">
    <property type="entry name" value="Aldolase class I"/>
    <property type="match status" value="1"/>
</dbReference>
<dbReference type="HAMAP" id="MF_01013">
    <property type="entry name" value="HisF"/>
    <property type="match status" value="1"/>
</dbReference>
<dbReference type="InterPro" id="IPR013785">
    <property type="entry name" value="Aldolase_TIM"/>
</dbReference>
<dbReference type="InterPro" id="IPR006062">
    <property type="entry name" value="His_biosynth"/>
</dbReference>
<dbReference type="InterPro" id="IPR004651">
    <property type="entry name" value="HisF"/>
</dbReference>
<dbReference type="InterPro" id="IPR050064">
    <property type="entry name" value="IGPS_HisA/HisF"/>
</dbReference>
<dbReference type="InterPro" id="IPR011060">
    <property type="entry name" value="RibuloseP-bd_barrel"/>
</dbReference>
<dbReference type="NCBIfam" id="TIGR00735">
    <property type="entry name" value="hisF"/>
    <property type="match status" value="1"/>
</dbReference>
<dbReference type="PANTHER" id="PTHR21235:SF2">
    <property type="entry name" value="IMIDAZOLE GLYCEROL PHOSPHATE SYNTHASE HISHF"/>
    <property type="match status" value="1"/>
</dbReference>
<dbReference type="PANTHER" id="PTHR21235">
    <property type="entry name" value="IMIDAZOLE GLYCEROL PHOSPHATE SYNTHASE SUBUNIT HISF/H IGP SYNTHASE SUBUNIT HISF/H"/>
    <property type="match status" value="1"/>
</dbReference>
<dbReference type="Pfam" id="PF00977">
    <property type="entry name" value="His_biosynth"/>
    <property type="match status" value="1"/>
</dbReference>
<dbReference type="SUPFAM" id="SSF51366">
    <property type="entry name" value="Ribulose-phoshate binding barrel"/>
    <property type="match status" value="1"/>
</dbReference>
<evidence type="ECO:0000255" key="1">
    <source>
        <dbReference type="HAMAP-Rule" id="MF_01013"/>
    </source>
</evidence>
<sequence>MYTDTGLAVRVIPCLDIDAGRVVKGVNFENLRDAGDPVELAAAYDAEGADELTFLDVTASSSGRATMLEVVRHTAEQVFIPLTVGGGVRTVADVDLLLRAGADKVSVNTAAIARPDLLADMATQFGSQCIVLSVDARKVPVGSSPTPSGWEVTTHGGRRGTGIDAVEWAARGADLGVGEILLNSMDADGTKAGFDLAMLRAVRAAVTVPVIASGGAGNVDHFAPAVAAGADAVLAASVFHFRELTIGQVKAAMAAEGNTVR</sequence>
<organism>
    <name type="scientific">Mycobacterium ulcerans (strain Agy99)</name>
    <dbReference type="NCBI Taxonomy" id="362242"/>
    <lineage>
        <taxon>Bacteria</taxon>
        <taxon>Bacillati</taxon>
        <taxon>Actinomycetota</taxon>
        <taxon>Actinomycetes</taxon>
        <taxon>Mycobacteriales</taxon>
        <taxon>Mycobacteriaceae</taxon>
        <taxon>Mycobacterium</taxon>
        <taxon>Mycobacterium ulcerans group</taxon>
    </lineage>
</organism>
<reference key="1">
    <citation type="journal article" date="2007" name="Genome Res.">
        <title>Reductive evolution and niche adaptation inferred from the genome of Mycobacterium ulcerans, the causative agent of Buruli ulcer.</title>
        <authorList>
            <person name="Stinear T.P."/>
            <person name="Seemann T."/>
            <person name="Pidot S."/>
            <person name="Frigui W."/>
            <person name="Reysset G."/>
            <person name="Garnier T."/>
            <person name="Meurice G."/>
            <person name="Simon D."/>
            <person name="Bouchier C."/>
            <person name="Ma L."/>
            <person name="Tichit M."/>
            <person name="Porter J.L."/>
            <person name="Ryan J."/>
            <person name="Johnson P.D.R."/>
            <person name="Davies J.K."/>
            <person name="Jenkin G.A."/>
            <person name="Small P.L.C."/>
            <person name="Jones L.M."/>
            <person name="Tekaia F."/>
            <person name="Laval F."/>
            <person name="Daffe M."/>
            <person name="Parkhill J."/>
            <person name="Cole S.T."/>
        </authorList>
    </citation>
    <scope>NUCLEOTIDE SEQUENCE [LARGE SCALE GENOMIC DNA]</scope>
    <source>
        <strain>Agy99</strain>
    </source>
</reference>